<feature type="chain" id="PRO_0000155987" description="dCTP deaminase">
    <location>
        <begin position="1"/>
        <end position="194"/>
    </location>
</feature>
<feature type="active site" description="Proton donor/acceptor" evidence="1">
    <location>
        <position position="138"/>
    </location>
</feature>
<feature type="binding site" evidence="1">
    <location>
        <begin position="110"/>
        <end position="115"/>
    </location>
    <ligand>
        <name>dCTP</name>
        <dbReference type="ChEBI" id="CHEBI:61481"/>
    </ligand>
</feature>
<feature type="binding site" evidence="1">
    <location>
        <position position="128"/>
    </location>
    <ligand>
        <name>dCTP</name>
        <dbReference type="ChEBI" id="CHEBI:61481"/>
    </ligand>
</feature>
<feature type="binding site" evidence="1">
    <location>
        <begin position="136"/>
        <end position="138"/>
    </location>
    <ligand>
        <name>dCTP</name>
        <dbReference type="ChEBI" id="CHEBI:61481"/>
    </ligand>
</feature>
<feature type="binding site" evidence="1">
    <location>
        <position position="171"/>
    </location>
    <ligand>
        <name>dCTP</name>
        <dbReference type="ChEBI" id="CHEBI:61481"/>
    </ligand>
</feature>
<feature type="binding site" evidence="1">
    <location>
        <position position="178"/>
    </location>
    <ligand>
        <name>dCTP</name>
        <dbReference type="ChEBI" id="CHEBI:61481"/>
    </ligand>
</feature>
<feature type="binding site" evidence="1">
    <location>
        <position position="182"/>
    </location>
    <ligand>
        <name>dCTP</name>
        <dbReference type="ChEBI" id="CHEBI:61481"/>
    </ligand>
</feature>
<sequence length="194" mass="21449">MRLCDTDIEHYLDQDLINISPRPTNDKISGATVDVRLGNSFRVFREHATPYIDLSGPREQVSAQLEKIMSDEIILAEGEAFFLHPGELALATTLESVKLPDNIVGWLDGRSSLARLGLMVHVTAHRIDPGWHGKIVLEFFNAGKLPLALRPNMAIGALSFEVLSGAAAKPYNAREDAKYKNQQSAISSRINEDK</sequence>
<evidence type="ECO:0000255" key="1">
    <source>
        <dbReference type="HAMAP-Rule" id="MF_00146"/>
    </source>
</evidence>
<gene>
    <name evidence="1" type="primary">dcd</name>
    <name type="ordered locus">HD_1661</name>
</gene>
<proteinExistence type="inferred from homology"/>
<organism>
    <name type="scientific">Haemophilus ducreyi (strain 35000HP / ATCC 700724)</name>
    <dbReference type="NCBI Taxonomy" id="233412"/>
    <lineage>
        <taxon>Bacteria</taxon>
        <taxon>Pseudomonadati</taxon>
        <taxon>Pseudomonadota</taxon>
        <taxon>Gammaproteobacteria</taxon>
        <taxon>Pasteurellales</taxon>
        <taxon>Pasteurellaceae</taxon>
        <taxon>Haemophilus</taxon>
    </lineage>
</organism>
<accession>Q7VL26</accession>
<name>DCD_HAEDU</name>
<dbReference type="EC" id="3.5.4.13" evidence="1"/>
<dbReference type="EMBL" id="AE017143">
    <property type="protein sequence ID" value="AAP96433.1"/>
    <property type="molecule type" value="Genomic_DNA"/>
</dbReference>
<dbReference type="RefSeq" id="WP_010945465.1">
    <property type="nucleotide sequence ID" value="NC_002940.2"/>
</dbReference>
<dbReference type="SMR" id="Q7VL26"/>
<dbReference type="STRING" id="233412.HD_1661"/>
<dbReference type="KEGG" id="hdu:HD_1661"/>
<dbReference type="eggNOG" id="COG0717">
    <property type="taxonomic scope" value="Bacteria"/>
</dbReference>
<dbReference type="HOGENOM" id="CLU_087476_2_0_6"/>
<dbReference type="OrthoDB" id="9780956at2"/>
<dbReference type="UniPathway" id="UPA00610">
    <property type="reaction ID" value="UER00665"/>
</dbReference>
<dbReference type="Proteomes" id="UP000001022">
    <property type="component" value="Chromosome"/>
</dbReference>
<dbReference type="GO" id="GO:0008829">
    <property type="term" value="F:dCTP deaminase activity"/>
    <property type="evidence" value="ECO:0007669"/>
    <property type="project" value="UniProtKB-UniRule"/>
</dbReference>
<dbReference type="GO" id="GO:0000166">
    <property type="term" value="F:nucleotide binding"/>
    <property type="evidence" value="ECO:0007669"/>
    <property type="project" value="UniProtKB-KW"/>
</dbReference>
<dbReference type="GO" id="GO:0006226">
    <property type="term" value="P:dUMP biosynthetic process"/>
    <property type="evidence" value="ECO:0007669"/>
    <property type="project" value="UniProtKB-UniPathway"/>
</dbReference>
<dbReference type="GO" id="GO:0006229">
    <property type="term" value="P:dUTP biosynthetic process"/>
    <property type="evidence" value="ECO:0007669"/>
    <property type="project" value="UniProtKB-UniRule"/>
</dbReference>
<dbReference type="GO" id="GO:0015949">
    <property type="term" value="P:nucleobase-containing small molecule interconversion"/>
    <property type="evidence" value="ECO:0007669"/>
    <property type="project" value="TreeGrafter"/>
</dbReference>
<dbReference type="CDD" id="cd07557">
    <property type="entry name" value="trimeric_dUTPase"/>
    <property type="match status" value="1"/>
</dbReference>
<dbReference type="FunFam" id="2.70.40.10:FF:000003">
    <property type="entry name" value="dCTP deaminase"/>
    <property type="match status" value="1"/>
</dbReference>
<dbReference type="Gene3D" id="2.70.40.10">
    <property type="match status" value="1"/>
</dbReference>
<dbReference type="HAMAP" id="MF_00146">
    <property type="entry name" value="dCTP_deaminase"/>
    <property type="match status" value="1"/>
</dbReference>
<dbReference type="InterPro" id="IPR011962">
    <property type="entry name" value="dCTP_deaminase"/>
</dbReference>
<dbReference type="InterPro" id="IPR036157">
    <property type="entry name" value="dUTPase-like_sf"/>
</dbReference>
<dbReference type="InterPro" id="IPR033704">
    <property type="entry name" value="dUTPase_trimeric"/>
</dbReference>
<dbReference type="NCBIfam" id="TIGR02274">
    <property type="entry name" value="dCTP_deam"/>
    <property type="match status" value="1"/>
</dbReference>
<dbReference type="PANTHER" id="PTHR42680">
    <property type="entry name" value="DCTP DEAMINASE"/>
    <property type="match status" value="1"/>
</dbReference>
<dbReference type="PANTHER" id="PTHR42680:SF3">
    <property type="entry name" value="DCTP DEAMINASE"/>
    <property type="match status" value="1"/>
</dbReference>
<dbReference type="Pfam" id="PF22769">
    <property type="entry name" value="DCD"/>
    <property type="match status" value="1"/>
</dbReference>
<dbReference type="SUPFAM" id="SSF51283">
    <property type="entry name" value="dUTPase-like"/>
    <property type="match status" value="1"/>
</dbReference>
<keyword id="KW-0378">Hydrolase</keyword>
<keyword id="KW-0546">Nucleotide metabolism</keyword>
<keyword id="KW-0547">Nucleotide-binding</keyword>
<keyword id="KW-1185">Reference proteome</keyword>
<protein>
    <recommendedName>
        <fullName evidence="1">dCTP deaminase</fullName>
        <ecNumber evidence="1">3.5.4.13</ecNumber>
    </recommendedName>
    <alternativeName>
        <fullName evidence="1">Deoxycytidine triphosphate deaminase</fullName>
    </alternativeName>
</protein>
<comment type="function">
    <text evidence="1">Catalyzes the deamination of dCTP to dUTP.</text>
</comment>
<comment type="catalytic activity">
    <reaction evidence="1">
        <text>dCTP + H2O + H(+) = dUTP + NH4(+)</text>
        <dbReference type="Rhea" id="RHEA:22680"/>
        <dbReference type="ChEBI" id="CHEBI:15377"/>
        <dbReference type="ChEBI" id="CHEBI:15378"/>
        <dbReference type="ChEBI" id="CHEBI:28938"/>
        <dbReference type="ChEBI" id="CHEBI:61481"/>
        <dbReference type="ChEBI" id="CHEBI:61555"/>
        <dbReference type="EC" id="3.5.4.13"/>
    </reaction>
</comment>
<comment type="pathway">
    <text evidence="1">Pyrimidine metabolism; dUMP biosynthesis; dUMP from dCTP (dUTP route): step 1/2.</text>
</comment>
<comment type="subunit">
    <text evidence="1">Homotrimer.</text>
</comment>
<comment type="similarity">
    <text evidence="1">Belongs to the dCTP deaminase family.</text>
</comment>
<reference key="1">
    <citation type="submission" date="2003-06" db="EMBL/GenBank/DDBJ databases">
        <title>The complete genome sequence of Haemophilus ducreyi.</title>
        <authorList>
            <person name="Munson R.S. Jr."/>
            <person name="Ray W.C."/>
            <person name="Mahairas G."/>
            <person name="Sabo P."/>
            <person name="Mungur R."/>
            <person name="Johnson L."/>
            <person name="Nguyen D."/>
            <person name="Wang J."/>
            <person name="Forst C."/>
            <person name="Hood L."/>
        </authorList>
    </citation>
    <scope>NUCLEOTIDE SEQUENCE [LARGE SCALE GENOMIC DNA]</scope>
    <source>
        <strain>35000HP / ATCC 700724</strain>
    </source>
</reference>